<organism>
    <name type="scientific">Phoma sp</name>
    <dbReference type="NCBI Taxonomy" id="1707701"/>
    <lineage>
        <taxon>Eukaryota</taxon>
        <taxon>Fungi</taxon>
        <taxon>Dikarya</taxon>
        <taxon>Ascomycota</taxon>
        <taxon>Pezizomycotina</taxon>
        <taxon>Dothideomycetes</taxon>
        <taxon>Pleosporomycetidae</taxon>
        <taxon>Pleosporales</taxon>
        <taxon>Pleosporineae</taxon>
        <taxon>Didymellaceae</taxon>
        <taxon>Phoma</taxon>
    </lineage>
</organism>
<sequence length="283" mass="30861">MSNQHSSTAAPSSYILDSANQPTSFDGNEQGDVNPKPLDHIRPVCNLETQMSNLPTDSVYASQPDGGLVAWLQVLGAWVLFFNTWGAMNSFGVFQTYYESGVLFDRSSSDIAWIGSIQTFCLQAMGLVAGPLYDRGGFKILIVTGSVGVVSGYMMLSLCEEFWQVLLAQGFLIGIAEGCLFTPMISILPTYFSTKIGLATGIASSGSSMGGVVYPIVMKSLMYNIGFAWTTRVLGFISLGMLLIPIIVMRERVKPALRVHRDLIDLSVFTDWPFIVFVIATMI</sequence>
<proteinExistence type="evidence at protein level"/>
<comment type="function">
    <text evidence="8">MFS-type transporter; part of the gene cluster that mediates the biosynthesis of eupenifeldin, a bistropolone meroterpenoid that acts as an antitumor agent.</text>
</comment>
<comment type="subcellular location">
    <subcellularLocation>
        <location evidence="1">Membrane</location>
        <topology evidence="1">Multi-pass membrane protein</topology>
    </subcellularLocation>
</comment>
<comment type="disruption phenotype">
    <text evidence="3">Does not abolish the production of eupenifeldin.</text>
</comment>
<comment type="biotechnology">
    <text evidence="2 4 5">Eupenifeldin is a bistropolone-humulene meroterpenoid first discovered as an antitumor and anti-leukemia agent (PubMed:8360103). This metabolite also shows anthelmintic activity against the parasitic worm Hemonchus contortus, anti-malarial activity as well as antifungal activity (PubMed:18095654, Ref.4).</text>
</comment>
<comment type="similarity">
    <text evidence="7">Belongs to the major facilitator superfamily. Monocarboxylate porter (TC 2.A.1.13) family.</text>
</comment>
<evidence type="ECO:0000255" key="1"/>
<evidence type="ECO:0000269" key="2">
    <source>
    </source>
</evidence>
<evidence type="ECO:0000269" key="3">
    <source>
    </source>
</evidence>
<evidence type="ECO:0000269" key="4">
    <source>
    </source>
</evidence>
<evidence type="ECO:0000269" key="5">
    <source ref="4"/>
</evidence>
<evidence type="ECO:0000303" key="6">
    <source>
    </source>
</evidence>
<evidence type="ECO:0000305" key="7"/>
<evidence type="ECO:0000305" key="8">
    <source>
    </source>
</evidence>
<feature type="chain" id="PRO_0000449157" description="MFS-type transporter eupM">
    <location>
        <begin position="1"/>
        <end position="283"/>
    </location>
</feature>
<feature type="transmembrane region" description="Helical" evidence="1">
    <location>
        <begin position="68"/>
        <end position="88"/>
    </location>
</feature>
<feature type="transmembrane region" description="Helical" evidence="1">
    <location>
        <begin position="111"/>
        <end position="131"/>
    </location>
</feature>
<feature type="transmembrane region" description="Helical" evidence="1">
    <location>
        <begin position="136"/>
        <end position="156"/>
    </location>
</feature>
<feature type="transmembrane region" description="Helical" evidence="1">
    <location>
        <begin position="165"/>
        <end position="185"/>
    </location>
</feature>
<feature type="transmembrane region" description="Helical" evidence="1">
    <location>
        <begin position="196"/>
        <end position="216"/>
    </location>
</feature>
<feature type="transmembrane region" description="Helical" evidence="1">
    <location>
        <begin position="227"/>
        <end position="247"/>
    </location>
</feature>
<feature type="transmembrane region" description="Helical" evidence="1">
    <location>
        <begin position="263"/>
        <end position="283"/>
    </location>
</feature>
<keyword id="KW-0472">Membrane</keyword>
<keyword id="KW-0812">Transmembrane</keyword>
<keyword id="KW-1133">Transmembrane helix</keyword>
<keyword id="KW-0813">Transport</keyword>
<name>EUPM_PHOSX</name>
<dbReference type="EMBL" id="MK400120">
    <property type="protein sequence ID" value="QCO93108.1"/>
    <property type="molecule type" value="Genomic_DNA"/>
</dbReference>
<dbReference type="SMR" id="A0A4P8GFD0"/>
<dbReference type="GO" id="GO:0016020">
    <property type="term" value="C:membrane"/>
    <property type="evidence" value="ECO:0007669"/>
    <property type="project" value="UniProtKB-SubCell"/>
</dbReference>
<dbReference type="GO" id="GO:0022857">
    <property type="term" value="F:transmembrane transporter activity"/>
    <property type="evidence" value="ECO:0007669"/>
    <property type="project" value="InterPro"/>
</dbReference>
<dbReference type="Gene3D" id="1.20.1250.20">
    <property type="entry name" value="MFS general substrate transporter like domains"/>
    <property type="match status" value="1"/>
</dbReference>
<dbReference type="InterPro" id="IPR011701">
    <property type="entry name" value="MFS"/>
</dbReference>
<dbReference type="InterPro" id="IPR020846">
    <property type="entry name" value="MFS_dom"/>
</dbReference>
<dbReference type="InterPro" id="IPR036259">
    <property type="entry name" value="MFS_trans_sf"/>
</dbReference>
<dbReference type="InterPro" id="IPR050327">
    <property type="entry name" value="Proton-linked_MCT"/>
</dbReference>
<dbReference type="PANTHER" id="PTHR11360:SF234">
    <property type="entry name" value="MFS-TYPE TRANSPORTER DBAD-RELATED"/>
    <property type="match status" value="1"/>
</dbReference>
<dbReference type="PANTHER" id="PTHR11360">
    <property type="entry name" value="MONOCARBOXYLATE TRANSPORTER"/>
    <property type="match status" value="1"/>
</dbReference>
<dbReference type="Pfam" id="PF07690">
    <property type="entry name" value="MFS_1"/>
    <property type="match status" value="1"/>
</dbReference>
<dbReference type="SUPFAM" id="SSF103473">
    <property type="entry name" value="MFS general substrate transporter"/>
    <property type="match status" value="1"/>
</dbReference>
<dbReference type="PROSITE" id="PS50850">
    <property type="entry name" value="MFS"/>
    <property type="match status" value="1"/>
</dbReference>
<gene>
    <name evidence="6" type="primary">eupM</name>
    <name type="ORF">gme12630</name>
</gene>
<protein>
    <recommendedName>
        <fullName evidence="6">MFS-type transporter eupM</fullName>
    </recommendedName>
    <alternativeName>
        <fullName evidence="6">Eupenifeldin biosynthesis cluster protein M</fullName>
    </alternativeName>
</protein>
<accession>A0A4P8GFD0</accession>
<reference key="1">
    <citation type="journal article" date="2019" name="Fungal Genet. Biol.">
        <title>Identification of the gene cluster for bistropolone-humulene meroterpenoid biosynthesis in Phoma sp.</title>
        <authorList>
            <person name="Zhai Y."/>
            <person name="Li Y."/>
            <person name="Zhang J."/>
            <person name="Zhang Y."/>
            <person name="Ren F."/>
            <person name="Zhang X."/>
            <person name="Liu G."/>
            <person name="Liu X."/>
            <person name="Che Y."/>
        </authorList>
    </citation>
    <scope>NUCLEOTIDE SEQUENCE [GENOMIC DNA]</scope>
    <scope>FUNCTION</scope>
    <scope>DISRUPTION PHENOTYPE</scope>
    <scope>PATHWAY</scope>
    <source>
        <strain>XZ068 / CGMCC No. 10481</strain>
    </source>
</reference>
<reference key="2">
    <citation type="journal article" date="1993" name="J. Antibiot.">
        <title>Eupenifeldin, a novel cytotoxic bistropolone from Eupenicillium brefeldianum.</title>
        <authorList>
            <person name="Mayerl F."/>
            <person name="Gao Q."/>
            <person name="Huang S."/>
            <person name="Klohr S.E."/>
            <person name="Matson J.A."/>
            <person name="Gustavson D.R."/>
            <person name="Pirnik D.M."/>
            <person name="Berry R.L."/>
            <person name="Fairchild C."/>
            <person name="Rose W.C."/>
        </authorList>
    </citation>
    <scope>BIOTECHNOLOGY</scope>
</reference>
<reference key="3">
    <citation type="journal article" date="2008" name="J. Nat. Prod.">
        <title>Noreupenifeldin, a tropolone from an unidentified ascomycete.</title>
        <authorList>
            <person name="Ayers S."/>
            <person name="Zink D.L."/>
            <person name="Powell J.S."/>
            <person name="Brown C.M."/>
            <person name="Grund A."/>
            <person name="Bills G.F."/>
            <person name="Platas G."/>
            <person name="Thompson D."/>
            <person name="Singh S.B."/>
        </authorList>
    </citation>
    <scope>BIOTECHNOLOGY</scope>
</reference>
<reference key="4">
    <citation type="journal article" date="2008" name="Phytochem. Lett.">
        <title>Ramiferin, a bisphenol-sesquiterpene from the fungus Kionochaeta ramifera BCC 7585.</title>
        <authorList>
            <person name="Bunyapaiboonsri T."/>
            <person name="Veeranondha S."/>
            <person name="Boonruangprapa T."/>
            <person name="Somrithipol S."/>
        </authorList>
    </citation>
    <scope>BIOTECHNOLOGY</scope>
</reference>